<protein>
    <recommendedName>
        <fullName>ATP-dependent RNA helicase DBP3</fullName>
        <ecNumber>3.6.4.13</ecNumber>
    </recommendedName>
</protein>
<keyword id="KW-0067">ATP-binding</keyword>
<keyword id="KW-0347">Helicase</keyword>
<keyword id="KW-0378">Hydrolase</keyword>
<keyword id="KW-0547">Nucleotide-binding</keyword>
<keyword id="KW-0539">Nucleus</keyword>
<keyword id="KW-1185">Reference proteome</keyword>
<keyword id="KW-0690">Ribosome biogenesis</keyword>
<keyword id="KW-0694">RNA-binding</keyword>
<keyword id="KW-0698">rRNA processing</keyword>
<dbReference type="EC" id="3.6.4.13"/>
<dbReference type="EMBL" id="CR380954">
    <property type="protein sequence ID" value="CAG59873.1"/>
    <property type="molecule type" value="Genomic_DNA"/>
</dbReference>
<dbReference type="RefSeq" id="XP_446940.1">
    <property type="nucleotide sequence ID" value="XM_446940.1"/>
</dbReference>
<dbReference type="SMR" id="Q6FS54"/>
<dbReference type="FunCoup" id="Q6FS54">
    <property type="interactions" value="442"/>
</dbReference>
<dbReference type="STRING" id="284593.Q6FS54"/>
<dbReference type="EnsemblFungi" id="CAGL0H03377g-T">
    <property type="protein sequence ID" value="CAGL0H03377g-T-p1"/>
    <property type="gene ID" value="CAGL0H03377g"/>
</dbReference>
<dbReference type="GeneID" id="2888822"/>
<dbReference type="KEGG" id="cgr:2888822"/>
<dbReference type="CGD" id="CAL0131546">
    <property type="gene designation" value="DBP3"/>
</dbReference>
<dbReference type="VEuPathDB" id="FungiDB:CAGL0H03377g"/>
<dbReference type="eggNOG" id="KOG0331">
    <property type="taxonomic scope" value="Eukaryota"/>
</dbReference>
<dbReference type="HOGENOM" id="CLU_003041_1_5_1"/>
<dbReference type="InParanoid" id="Q6FS54"/>
<dbReference type="OMA" id="KKTHDMY"/>
<dbReference type="Proteomes" id="UP000002428">
    <property type="component" value="Chromosome H"/>
</dbReference>
<dbReference type="GO" id="GO:0005730">
    <property type="term" value="C:nucleolus"/>
    <property type="evidence" value="ECO:0007669"/>
    <property type="project" value="UniProtKB-SubCell"/>
</dbReference>
<dbReference type="GO" id="GO:0030687">
    <property type="term" value="C:preribosome, large subunit precursor"/>
    <property type="evidence" value="ECO:0007669"/>
    <property type="project" value="EnsemblFungi"/>
</dbReference>
<dbReference type="GO" id="GO:0005524">
    <property type="term" value="F:ATP binding"/>
    <property type="evidence" value="ECO:0007669"/>
    <property type="project" value="UniProtKB-KW"/>
</dbReference>
<dbReference type="GO" id="GO:0016887">
    <property type="term" value="F:ATP hydrolysis activity"/>
    <property type="evidence" value="ECO:0007669"/>
    <property type="project" value="RHEA"/>
</dbReference>
<dbReference type="GO" id="GO:0003723">
    <property type="term" value="F:RNA binding"/>
    <property type="evidence" value="ECO:0007669"/>
    <property type="project" value="UniProtKB-KW"/>
</dbReference>
<dbReference type="GO" id="GO:0003724">
    <property type="term" value="F:RNA helicase activity"/>
    <property type="evidence" value="ECO:0007669"/>
    <property type="project" value="UniProtKB-EC"/>
</dbReference>
<dbReference type="GO" id="GO:0000464">
    <property type="term" value="P:endonucleolytic cleavage in ITS1 upstream of 5.8S rRNA from tricistronic rRNA transcript (SSU-rRNA, 5.8S rRNA, LSU-rRNA)"/>
    <property type="evidence" value="ECO:0007669"/>
    <property type="project" value="EnsemblFungi"/>
</dbReference>
<dbReference type="CDD" id="cd00268">
    <property type="entry name" value="DEADc"/>
    <property type="match status" value="1"/>
</dbReference>
<dbReference type="CDD" id="cd18787">
    <property type="entry name" value="SF2_C_DEAD"/>
    <property type="match status" value="1"/>
</dbReference>
<dbReference type="FunFam" id="3.40.50.300:FF:002174">
    <property type="entry name" value="ATP-dependent RNA helicase DBP3"/>
    <property type="match status" value="1"/>
</dbReference>
<dbReference type="FunFam" id="3.40.50.300:FF:000008">
    <property type="entry name" value="ATP-dependent RNA helicase RhlB"/>
    <property type="match status" value="1"/>
</dbReference>
<dbReference type="Gene3D" id="3.40.50.300">
    <property type="entry name" value="P-loop containing nucleotide triphosphate hydrolases"/>
    <property type="match status" value="2"/>
</dbReference>
<dbReference type="InterPro" id="IPR011545">
    <property type="entry name" value="DEAD/DEAH_box_helicase_dom"/>
</dbReference>
<dbReference type="InterPro" id="IPR014001">
    <property type="entry name" value="Helicase_ATP-bd"/>
</dbReference>
<dbReference type="InterPro" id="IPR001650">
    <property type="entry name" value="Helicase_C-like"/>
</dbReference>
<dbReference type="InterPro" id="IPR027417">
    <property type="entry name" value="P-loop_NTPase"/>
</dbReference>
<dbReference type="InterPro" id="IPR000629">
    <property type="entry name" value="RNA-helicase_DEAD-box_CS"/>
</dbReference>
<dbReference type="PANTHER" id="PTHR47958">
    <property type="entry name" value="ATP-DEPENDENT RNA HELICASE DBP3"/>
    <property type="match status" value="1"/>
</dbReference>
<dbReference type="Pfam" id="PF00270">
    <property type="entry name" value="DEAD"/>
    <property type="match status" value="1"/>
</dbReference>
<dbReference type="Pfam" id="PF00271">
    <property type="entry name" value="Helicase_C"/>
    <property type="match status" value="1"/>
</dbReference>
<dbReference type="SMART" id="SM00487">
    <property type="entry name" value="DEXDc"/>
    <property type="match status" value="1"/>
</dbReference>
<dbReference type="SMART" id="SM00490">
    <property type="entry name" value="HELICc"/>
    <property type="match status" value="1"/>
</dbReference>
<dbReference type="SUPFAM" id="SSF52540">
    <property type="entry name" value="P-loop containing nucleoside triphosphate hydrolases"/>
    <property type="match status" value="2"/>
</dbReference>
<dbReference type="PROSITE" id="PS00039">
    <property type="entry name" value="DEAD_ATP_HELICASE"/>
    <property type="match status" value="1"/>
</dbReference>
<dbReference type="PROSITE" id="PS51192">
    <property type="entry name" value="HELICASE_ATP_BIND_1"/>
    <property type="match status" value="1"/>
</dbReference>
<dbReference type="PROSITE" id="PS51194">
    <property type="entry name" value="HELICASE_CTER"/>
    <property type="match status" value="1"/>
</dbReference>
<dbReference type="PROSITE" id="PS51195">
    <property type="entry name" value="Q_MOTIF"/>
    <property type="match status" value="1"/>
</dbReference>
<feature type="chain" id="PRO_0000232175" description="ATP-dependent RNA helicase DBP3">
    <location>
        <begin position="1"/>
        <end position="540"/>
    </location>
</feature>
<feature type="domain" description="Helicase ATP-binding" evidence="2">
    <location>
        <begin position="159"/>
        <end position="332"/>
    </location>
</feature>
<feature type="domain" description="Helicase C-terminal" evidence="3">
    <location>
        <begin position="361"/>
        <end position="510"/>
    </location>
</feature>
<feature type="region of interest" description="Disordered" evidence="4">
    <location>
        <begin position="1"/>
        <end position="89"/>
    </location>
</feature>
<feature type="short sequence motif" description="Q motif">
    <location>
        <begin position="130"/>
        <end position="156"/>
    </location>
</feature>
<feature type="short sequence motif" description="DEAD box">
    <location>
        <begin position="279"/>
        <end position="282"/>
    </location>
</feature>
<feature type="compositionally biased region" description="Basic and acidic residues" evidence="4">
    <location>
        <begin position="1"/>
        <end position="35"/>
    </location>
</feature>
<feature type="compositionally biased region" description="Basic residues" evidence="4">
    <location>
        <begin position="36"/>
        <end position="52"/>
    </location>
</feature>
<feature type="compositionally biased region" description="Basic and acidic residues" evidence="4">
    <location>
        <begin position="53"/>
        <end position="62"/>
    </location>
</feature>
<feature type="compositionally biased region" description="Basic and acidic residues" evidence="4">
    <location>
        <begin position="68"/>
        <end position="79"/>
    </location>
</feature>
<feature type="binding site" evidence="2">
    <location>
        <begin position="172"/>
        <end position="179"/>
    </location>
    <ligand>
        <name>ATP</name>
        <dbReference type="ChEBI" id="CHEBI:30616"/>
    </ligand>
</feature>
<name>DBP3_CANGA</name>
<sequence>MTVEESKKRKLTDDVAIKQNEKKIKKDKKVKDKKDKKDKKDKKDKKEKKEKKEKKEKNDKKDKKDKKDKKAEQVDKLSETTEQPSKQVKIGAYVENEELSKQPQSVIDEFFKENEVSVEDPSKLNLRPLLAFNQISLDKEVQNEIAKFPKPTPIQAVSWPYLLSGKDVIGVAETGSGKTFAFGVPAINNLLTSSSKPKGIKVLVISPTRELASQIYDNLVLLTQKVGIDCCVVYGGVPKDDQRRQIAKSNVVVATPGRLLDLIEEGSVDLSPVDYMVLDEADRMLEKGFEEDIKRIIGQTKSKDRQTLMFTATWPKEVRELASTFMKEPVKVSIGNRDELSANKRITQIVEVVDPRSKERKLLDLLKKYQSGPKKNDKVLIFALYKKEASRVERNLNYNGYKVAAIHGDLSQQQRTQALNEFKSGKSNLLLATDVAARGLDIPNVKTVINLTFPLTVEDYVHRIGRTGRAGQTGTAHTLFTEQEKHLAGGLVNVLNGANQPVPEDLIKFGTHTKRKEHGAYGAFFKDIDMSKKPKKITFD</sequence>
<gene>
    <name type="primary">DBP3</name>
    <name type="ordered locus">CAGL0H03377g</name>
</gene>
<evidence type="ECO:0000250" key="1"/>
<evidence type="ECO:0000255" key="2">
    <source>
        <dbReference type="PROSITE-ProRule" id="PRU00541"/>
    </source>
</evidence>
<evidence type="ECO:0000255" key="3">
    <source>
        <dbReference type="PROSITE-ProRule" id="PRU00542"/>
    </source>
</evidence>
<evidence type="ECO:0000256" key="4">
    <source>
        <dbReference type="SAM" id="MobiDB-lite"/>
    </source>
</evidence>
<evidence type="ECO:0000305" key="5"/>
<comment type="function">
    <text evidence="1">ATP-dependent RNA helicase required for 60S ribosomal subunit synthesis. Involved in efficient pre-rRNA processing, predominantly at site A3, which is necessary for the normal formation of 25S and 5.8S rRNAs (By similarity).</text>
</comment>
<comment type="catalytic activity">
    <reaction>
        <text>ATP + H2O = ADP + phosphate + H(+)</text>
        <dbReference type="Rhea" id="RHEA:13065"/>
        <dbReference type="ChEBI" id="CHEBI:15377"/>
        <dbReference type="ChEBI" id="CHEBI:15378"/>
        <dbReference type="ChEBI" id="CHEBI:30616"/>
        <dbReference type="ChEBI" id="CHEBI:43474"/>
        <dbReference type="ChEBI" id="CHEBI:456216"/>
        <dbReference type="EC" id="3.6.4.13"/>
    </reaction>
</comment>
<comment type="subcellular location">
    <subcellularLocation>
        <location evidence="1">Nucleus</location>
        <location evidence="1">Nucleolus</location>
    </subcellularLocation>
</comment>
<comment type="domain">
    <text>The Q motif is unique to and characteristic of the DEAD box family of RNA helicases and controls ATP binding and hydrolysis.</text>
</comment>
<comment type="similarity">
    <text evidence="5">Belongs to the DEAD box helicase family. DDX5/DBP2 subfamily.</text>
</comment>
<proteinExistence type="inferred from homology"/>
<organism>
    <name type="scientific">Candida glabrata (strain ATCC 2001 / BCRC 20586 / JCM 3761 / NBRC 0622 / NRRL Y-65 / CBS 138)</name>
    <name type="common">Yeast</name>
    <name type="synonym">Nakaseomyces glabratus</name>
    <dbReference type="NCBI Taxonomy" id="284593"/>
    <lineage>
        <taxon>Eukaryota</taxon>
        <taxon>Fungi</taxon>
        <taxon>Dikarya</taxon>
        <taxon>Ascomycota</taxon>
        <taxon>Saccharomycotina</taxon>
        <taxon>Saccharomycetes</taxon>
        <taxon>Saccharomycetales</taxon>
        <taxon>Saccharomycetaceae</taxon>
        <taxon>Nakaseomyces</taxon>
    </lineage>
</organism>
<reference key="1">
    <citation type="journal article" date="2004" name="Nature">
        <title>Genome evolution in yeasts.</title>
        <authorList>
            <person name="Dujon B."/>
            <person name="Sherman D."/>
            <person name="Fischer G."/>
            <person name="Durrens P."/>
            <person name="Casaregola S."/>
            <person name="Lafontaine I."/>
            <person name="de Montigny J."/>
            <person name="Marck C."/>
            <person name="Neuveglise C."/>
            <person name="Talla E."/>
            <person name="Goffard N."/>
            <person name="Frangeul L."/>
            <person name="Aigle M."/>
            <person name="Anthouard V."/>
            <person name="Babour A."/>
            <person name="Barbe V."/>
            <person name="Barnay S."/>
            <person name="Blanchin S."/>
            <person name="Beckerich J.-M."/>
            <person name="Beyne E."/>
            <person name="Bleykasten C."/>
            <person name="Boisrame A."/>
            <person name="Boyer J."/>
            <person name="Cattolico L."/>
            <person name="Confanioleri F."/>
            <person name="de Daruvar A."/>
            <person name="Despons L."/>
            <person name="Fabre E."/>
            <person name="Fairhead C."/>
            <person name="Ferry-Dumazet H."/>
            <person name="Groppi A."/>
            <person name="Hantraye F."/>
            <person name="Hennequin C."/>
            <person name="Jauniaux N."/>
            <person name="Joyet P."/>
            <person name="Kachouri R."/>
            <person name="Kerrest A."/>
            <person name="Koszul R."/>
            <person name="Lemaire M."/>
            <person name="Lesur I."/>
            <person name="Ma L."/>
            <person name="Muller H."/>
            <person name="Nicaud J.-M."/>
            <person name="Nikolski M."/>
            <person name="Oztas S."/>
            <person name="Ozier-Kalogeropoulos O."/>
            <person name="Pellenz S."/>
            <person name="Potier S."/>
            <person name="Richard G.-F."/>
            <person name="Straub M.-L."/>
            <person name="Suleau A."/>
            <person name="Swennen D."/>
            <person name="Tekaia F."/>
            <person name="Wesolowski-Louvel M."/>
            <person name="Westhof E."/>
            <person name="Wirth B."/>
            <person name="Zeniou-Meyer M."/>
            <person name="Zivanovic Y."/>
            <person name="Bolotin-Fukuhara M."/>
            <person name="Thierry A."/>
            <person name="Bouchier C."/>
            <person name="Caudron B."/>
            <person name="Scarpelli C."/>
            <person name="Gaillardin C."/>
            <person name="Weissenbach J."/>
            <person name="Wincker P."/>
            <person name="Souciet J.-L."/>
        </authorList>
    </citation>
    <scope>NUCLEOTIDE SEQUENCE [LARGE SCALE GENOMIC DNA]</scope>
    <source>
        <strain>ATCC 2001 / BCRC 20586 / JCM 3761 / NBRC 0622 / NRRL Y-65 / CBS 138</strain>
    </source>
</reference>
<accession>Q6FS54</accession>